<feature type="chain" id="PRO_0000137765" description="Argininosuccinate lyase">
    <location>
        <begin position="1"/>
        <end position="471"/>
    </location>
</feature>
<keyword id="KW-0028">Amino-acid biosynthesis</keyword>
<keyword id="KW-0055">Arginine biosynthesis</keyword>
<keyword id="KW-0963">Cytoplasm</keyword>
<keyword id="KW-0456">Lyase</keyword>
<keyword id="KW-1185">Reference proteome</keyword>
<proteinExistence type="inferred from homology"/>
<name>ARLY_DEIRA</name>
<protein>
    <recommendedName>
        <fullName evidence="1">Argininosuccinate lyase</fullName>
        <shortName evidence="1">ASAL</shortName>
        <ecNumber evidence="1">4.3.2.1</ecNumber>
    </recommendedName>
    <alternativeName>
        <fullName evidence="1">Arginosuccinase</fullName>
    </alternativeName>
</protein>
<dbReference type="EC" id="4.3.2.1" evidence="1"/>
<dbReference type="EMBL" id="AE000513">
    <property type="protein sequence ID" value="AAF10258.1"/>
    <property type="status" value="ALT_INIT"/>
    <property type="molecule type" value="Genomic_DNA"/>
</dbReference>
<dbReference type="PIR" id="C75488">
    <property type="entry name" value="C75488"/>
</dbReference>
<dbReference type="RefSeq" id="NP_294401.1">
    <property type="nucleotide sequence ID" value="NC_001263.1"/>
</dbReference>
<dbReference type="RefSeq" id="WP_027479496.1">
    <property type="nucleotide sequence ID" value="NC_001263.1"/>
</dbReference>
<dbReference type="SMR" id="Q9RWJ0"/>
<dbReference type="FunCoup" id="Q9RWJ0">
    <property type="interactions" value="418"/>
</dbReference>
<dbReference type="STRING" id="243230.DR_0678"/>
<dbReference type="PaxDb" id="243230-DR_0678"/>
<dbReference type="EnsemblBacteria" id="AAF10258">
    <property type="protein sequence ID" value="AAF10258"/>
    <property type="gene ID" value="DR_0678"/>
</dbReference>
<dbReference type="GeneID" id="69516923"/>
<dbReference type="KEGG" id="dra:DR_0678"/>
<dbReference type="PATRIC" id="fig|243230.17.peg.855"/>
<dbReference type="eggNOG" id="COG0165">
    <property type="taxonomic scope" value="Bacteria"/>
</dbReference>
<dbReference type="HOGENOM" id="CLU_027272_2_3_0"/>
<dbReference type="InParanoid" id="Q9RWJ0"/>
<dbReference type="OrthoDB" id="9769623at2"/>
<dbReference type="UniPathway" id="UPA00068">
    <property type="reaction ID" value="UER00114"/>
</dbReference>
<dbReference type="Proteomes" id="UP000002524">
    <property type="component" value="Chromosome 1"/>
</dbReference>
<dbReference type="GO" id="GO:0005829">
    <property type="term" value="C:cytosol"/>
    <property type="evidence" value="ECO:0000318"/>
    <property type="project" value="GO_Central"/>
</dbReference>
<dbReference type="GO" id="GO:0004056">
    <property type="term" value="F:argininosuccinate lyase activity"/>
    <property type="evidence" value="ECO:0000318"/>
    <property type="project" value="GO_Central"/>
</dbReference>
<dbReference type="GO" id="GO:0042450">
    <property type="term" value="P:arginine biosynthetic process via ornithine"/>
    <property type="evidence" value="ECO:0000318"/>
    <property type="project" value="GO_Central"/>
</dbReference>
<dbReference type="GO" id="GO:0006526">
    <property type="term" value="P:L-arginine biosynthetic process"/>
    <property type="evidence" value="ECO:0007669"/>
    <property type="project" value="UniProtKB-UniRule"/>
</dbReference>
<dbReference type="CDD" id="cd01359">
    <property type="entry name" value="Argininosuccinate_lyase"/>
    <property type="match status" value="1"/>
</dbReference>
<dbReference type="FunFam" id="1.10.275.10:FF:000002">
    <property type="entry name" value="Argininosuccinate lyase"/>
    <property type="match status" value="1"/>
</dbReference>
<dbReference type="FunFam" id="1.10.40.30:FF:000001">
    <property type="entry name" value="Argininosuccinate lyase"/>
    <property type="match status" value="1"/>
</dbReference>
<dbReference type="FunFam" id="1.20.200.10:FF:000015">
    <property type="entry name" value="argininosuccinate lyase isoform X2"/>
    <property type="match status" value="1"/>
</dbReference>
<dbReference type="Gene3D" id="1.10.40.30">
    <property type="entry name" value="Fumarase/aspartase (C-terminal domain)"/>
    <property type="match status" value="1"/>
</dbReference>
<dbReference type="Gene3D" id="1.20.200.10">
    <property type="entry name" value="Fumarase/aspartase (Central domain)"/>
    <property type="match status" value="1"/>
</dbReference>
<dbReference type="Gene3D" id="1.10.275.10">
    <property type="entry name" value="Fumarase/aspartase (N-terminal domain)"/>
    <property type="match status" value="1"/>
</dbReference>
<dbReference type="HAMAP" id="MF_00006">
    <property type="entry name" value="Arg_succ_lyase"/>
    <property type="match status" value="1"/>
</dbReference>
<dbReference type="InterPro" id="IPR029419">
    <property type="entry name" value="Arg_succ_lyase_C"/>
</dbReference>
<dbReference type="InterPro" id="IPR009049">
    <property type="entry name" value="Argininosuccinate_lyase"/>
</dbReference>
<dbReference type="InterPro" id="IPR024083">
    <property type="entry name" value="Fumarase/histidase_N"/>
</dbReference>
<dbReference type="InterPro" id="IPR020557">
    <property type="entry name" value="Fumarate_lyase_CS"/>
</dbReference>
<dbReference type="InterPro" id="IPR000362">
    <property type="entry name" value="Fumarate_lyase_fam"/>
</dbReference>
<dbReference type="InterPro" id="IPR022761">
    <property type="entry name" value="Fumarate_lyase_N"/>
</dbReference>
<dbReference type="InterPro" id="IPR008948">
    <property type="entry name" value="L-Aspartase-like"/>
</dbReference>
<dbReference type="NCBIfam" id="TIGR00838">
    <property type="entry name" value="argH"/>
    <property type="match status" value="1"/>
</dbReference>
<dbReference type="PANTHER" id="PTHR43814">
    <property type="entry name" value="ARGININOSUCCINATE LYASE"/>
    <property type="match status" value="1"/>
</dbReference>
<dbReference type="PANTHER" id="PTHR43814:SF1">
    <property type="entry name" value="ARGININOSUCCINATE LYASE"/>
    <property type="match status" value="1"/>
</dbReference>
<dbReference type="Pfam" id="PF14698">
    <property type="entry name" value="ASL_C2"/>
    <property type="match status" value="1"/>
</dbReference>
<dbReference type="Pfam" id="PF00206">
    <property type="entry name" value="Lyase_1"/>
    <property type="match status" value="1"/>
</dbReference>
<dbReference type="PRINTS" id="PR00145">
    <property type="entry name" value="ARGSUCLYASE"/>
</dbReference>
<dbReference type="PRINTS" id="PR00149">
    <property type="entry name" value="FUMRATELYASE"/>
</dbReference>
<dbReference type="SUPFAM" id="SSF48557">
    <property type="entry name" value="L-aspartase-like"/>
    <property type="match status" value="1"/>
</dbReference>
<dbReference type="PROSITE" id="PS00163">
    <property type="entry name" value="FUMARATE_LYASES"/>
    <property type="match status" value="1"/>
</dbReference>
<organism>
    <name type="scientific">Deinococcus radiodurans (strain ATCC 13939 / DSM 20539 / JCM 16871 / CCUG 27074 / LMG 4051 / NBRC 15346 / NCIMB 9279 / VKM B-1422 / R1)</name>
    <dbReference type="NCBI Taxonomy" id="243230"/>
    <lineage>
        <taxon>Bacteria</taxon>
        <taxon>Thermotogati</taxon>
        <taxon>Deinococcota</taxon>
        <taxon>Deinococci</taxon>
        <taxon>Deinococcales</taxon>
        <taxon>Deinococcaceae</taxon>
        <taxon>Deinococcus</taxon>
    </lineage>
</organism>
<accession>Q9RWJ0</accession>
<reference key="1">
    <citation type="journal article" date="1999" name="Science">
        <title>Genome sequence of the radioresistant bacterium Deinococcus radiodurans R1.</title>
        <authorList>
            <person name="White O."/>
            <person name="Eisen J.A."/>
            <person name="Heidelberg J.F."/>
            <person name="Hickey E.K."/>
            <person name="Peterson J.D."/>
            <person name="Dodson R.J."/>
            <person name="Haft D.H."/>
            <person name="Gwinn M.L."/>
            <person name="Nelson W.C."/>
            <person name="Richardson D.L."/>
            <person name="Moffat K.S."/>
            <person name="Qin H."/>
            <person name="Jiang L."/>
            <person name="Pamphile W."/>
            <person name="Crosby M."/>
            <person name="Shen M."/>
            <person name="Vamathevan J.J."/>
            <person name="Lam P."/>
            <person name="McDonald L.A."/>
            <person name="Utterback T.R."/>
            <person name="Zalewski C."/>
            <person name="Makarova K.S."/>
            <person name="Aravind L."/>
            <person name="Daly M.J."/>
            <person name="Minton K.W."/>
            <person name="Fleischmann R.D."/>
            <person name="Ketchum K.A."/>
            <person name="Nelson K.E."/>
            <person name="Salzberg S.L."/>
            <person name="Smith H.O."/>
            <person name="Venter J.C."/>
            <person name="Fraser C.M."/>
        </authorList>
    </citation>
    <scope>NUCLEOTIDE SEQUENCE [LARGE SCALE GENOMIC DNA]</scope>
    <source>
        <strain>ATCC 13939 / DSM 20539 / JCM 16871 / CCUG 27074 / LMG 4051 / NBRC 15346 / NCIMB 9279 / VKM B-1422 / R1</strain>
    </source>
</reference>
<evidence type="ECO:0000255" key="1">
    <source>
        <dbReference type="HAMAP-Rule" id="MF_00006"/>
    </source>
</evidence>
<evidence type="ECO:0000305" key="2"/>
<sequence length="471" mass="51779">MTNQKQETKLWGGRFAEKTAELVELFNASVGFDQRLAEQDIRGSLAHVAMLGGQGILTAEEVSQITDGLNGVLADIRAGNFEWRLDREDVHMNVEAALRDRIGPVAGKLHTARSRNDQVAVDFRLFTKEAALDLAEQTRALRRVMLAEAEKHLQNEVILPGYTHLQVAQPILLAHWFMAYVAMLERDEGRFRDAAERMDESPLGSSALAGTPWPLDRHATAEALGFARPTANSLDGVGSRDFALEFLSACAILSAHLSRLSEELILYSTFEFGFITLPDSHTTGSSIMPQKKNPDVSELARGKAGRVFGNLMALLTVVKGTPLAYNKDLQEDKEGVFDSYDTLSIVLRLYAEMLPKTVWHADVTKAAAARGYSTATDVADYLARQGVPFREAHEVVGGLVGLASRSDRQLWELTDAELKAAHPLLSAEVAQKLTVEESVRSRQSYGGTAPERVREAVEAAKEKLRQETGQP</sequence>
<gene>
    <name evidence="1" type="primary">argH</name>
    <name type="ordered locus">DR_0678</name>
</gene>
<comment type="catalytic activity">
    <reaction evidence="1">
        <text>2-(N(omega)-L-arginino)succinate = fumarate + L-arginine</text>
        <dbReference type="Rhea" id="RHEA:24020"/>
        <dbReference type="ChEBI" id="CHEBI:29806"/>
        <dbReference type="ChEBI" id="CHEBI:32682"/>
        <dbReference type="ChEBI" id="CHEBI:57472"/>
        <dbReference type="EC" id="4.3.2.1"/>
    </reaction>
</comment>
<comment type="pathway">
    <text evidence="1">Amino-acid biosynthesis; L-arginine biosynthesis; L-arginine from L-ornithine and carbamoyl phosphate: step 3/3.</text>
</comment>
<comment type="subcellular location">
    <subcellularLocation>
        <location evidence="1">Cytoplasm</location>
    </subcellularLocation>
</comment>
<comment type="similarity">
    <text evidence="1">Belongs to the lyase 1 family. Argininosuccinate lyase subfamily.</text>
</comment>
<comment type="sequence caution" evidence="2">
    <conflict type="erroneous initiation">
        <sequence resource="EMBL-CDS" id="AAF10258"/>
    </conflict>
</comment>